<evidence type="ECO:0000250" key="1">
    <source>
        <dbReference type="UniProtKB" id="Q8N5H3"/>
    </source>
</evidence>
<evidence type="ECO:0000250" key="2">
    <source>
        <dbReference type="UniProtKB" id="Q9QUI1"/>
    </source>
</evidence>
<evidence type="ECO:0000256" key="3">
    <source>
        <dbReference type="SAM" id="MobiDB-lite"/>
    </source>
</evidence>
<evidence type="ECO:0000269" key="4">
    <source>
    </source>
</evidence>
<evidence type="ECO:0000303" key="5">
    <source>
    </source>
</evidence>
<evidence type="ECO:0000305" key="6"/>
<evidence type="ECO:0000305" key="7">
    <source>
    </source>
</evidence>
<evidence type="ECO:0000312" key="8">
    <source>
        <dbReference type="EMBL" id="AAH93377.1"/>
    </source>
</evidence>
<evidence type="ECO:0000312" key="9">
    <source>
        <dbReference type="RGD" id="1311544"/>
    </source>
</evidence>
<dbReference type="EMBL" id="AC134224">
    <property type="status" value="NOT_ANNOTATED_CDS"/>
    <property type="molecule type" value="Genomic_DNA"/>
</dbReference>
<dbReference type="EMBL" id="BC093377">
    <property type="protein sequence ID" value="AAH93377.1"/>
    <property type="molecule type" value="mRNA"/>
</dbReference>
<dbReference type="RefSeq" id="NP_001015013.1">
    <molecule id="Q566R4-1"/>
    <property type="nucleotide sequence ID" value="NM_001015013.1"/>
</dbReference>
<dbReference type="SMR" id="Q566R4"/>
<dbReference type="FunCoup" id="Q566R4">
    <property type="interactions" value="133"/>
</dbReference>
<dbReference type="STRING" id="10116.ENSRNOP00000016987"/>
<dbReference type="PhosphoSitePlus" id="Q566R4"/>
<dbReference type="PaxDb" id="10116-ENSRNOP00000016987"/>
<dbReference type="Ensembl" id="ENSRNOT00000016987.6">
    <molecule id="Q566R4-1"/>
    <property type="protein sequence ID" value="ENSRNOP00000016987.5"/>
    <property type="gene ID" value="ENSRNOG00000024239.5"/>
</dbReference>
<dbReference type="GeneID" id="309170"/>
<dbReference type="KEGG" id="rno:309170"/>
<dbReference type="UCSC" id="RGD:1311544">
    <molecule id="Q566R4-1"/>
    <property type="organism name" value="rat"/>
</dbReference>
<dbReference type="AGR" id="RGD:1311544"/>
<dbReference type="CTD" id="23625"/>
<dbReference type="RGD" id="1311544">
    <property type="gene designation" value="Fam89b"/>
</dbReference>
<dbReference type="eggNOG" id="ENOG502S05U">
    <property type="taxonomic scope" value="Eukaryota"/>
</dbReference>
<dbReference type="GeneTree" id="ENSGT00940000153370"/>
<dbReference type="HOGENOM" id="CLU_128818_0_0_1"/>
<dbReference type="InParanoid" id="Q566R4"/>
<dbReference type="OMA" id="MSLCQDM"/>
<dbReference type="OrthoDB" id="1681166at2759"/>
<dbReference type="PhylomeDB" id="Q566R4"/>
<dbReference type="PRO" id="PR:Q566R4"/>
<dbReference type="Proteomes" id="UP000002494">
    <property type="component" value="Chromosome 1"/>
</dbReference>
<dbReference type="Bgee" id="ENSRNOG00000024239">
    <property type="expression patterns" value="Expressed in skeletal muscle tissue and 20 other cell types or tissues"/>
</dbReference>
<dbReference type="GO" id="GO:0005737">
    <property type="term" value="C:cytoplasm"/>
    <property type="evidence" value="ECO:0000266"/>
    <property type="project" value="RGD"/>
</dbReference>
<dbReference type="GO" id="GO:0030027">
    <property type="term" value="C:lamellipodium"/>
    <property type="evidence" value="ECO:0000250"/>
    <property type="project" value="UniProtKB"/>
</dbReference>
<dbReference type="GO" id="GO:0001222">
    <property type="term" value="F:transcription corepressor binding"/>
    <property type="evidence" value="ECO:0000266"/>
    <property type="project" value="RGD"/>
</dbReference>
<dbReference type="GO" id="GO:0030010">
    <property type="term" value="P:establishment of cell polarity"/>
    <property type="evidence" value="ECO:0000250"/>
    <property type="project" value="UniProtKB"/>
</dbReference>
<dbReference type="GO" id="GO:0060392">
    <property type="term" value="P:negative regulation of SMAD protein signal transduction"/>
    <property type="evidence" value="ECO:0000266"/>
    <property type="project" value="RGD"/>
</dbReference>
<dbReference type="GO" id="GO:0030512">
    <property type="term" value="P:negative regulation of transforming growth factor beta receptor signaling pathway"/>
    <property type="evidence" value="ECO:0000266"/>
    <property type="project" value="RGD"/>
</dbReference>
<dbReference type="GO" id="GO:0030335">
    <property type="term" value="P:positive regulation of cell migration"/>
    <property type="evidence" value="ECO:0000250"/>
    <property type="project" value="UniProtKB"/>
</dbReference>
<dbReference type="InterPro" id="IPR039499">
    <property type="entry name" value="LURA1/LRA25"/>
</dbReference>
<dbReference type="PANTHER" id="PTHR46949">
    <property type="entry name" value="LEUCINE REPEAT ADAPTER PROTEIN 25"/>
    <property type="match status" value="1"/>
</dbReference>
<dbReference type="PANTHER" id="PTHR46949:SF2">
    <property type="entry name" value="LEUCINE REPEAT ADAPTER PROTEIN 25"/>
    <property type="match status" value="1"/>
</dbReference>
<dbReference type="Pfam" id="PF14854">
    <property type="entry name" value="LURAP"/>
    <property type="match status" value="1"/>
</dbReference>
<reference key="1">
    <citation type="journal article" date="2014" name="J. Biol. Chem.">
        <title>Adaptor protein LRAP25 mediates myotonic dystrophy kinase-related Cdc42-binding kinase (MRCK) regulation of LIMK1 protein in lamellipodial F-actin dynamics.</title>
        <authorList>
            <person name="Lee I.C."/>
            <person name="Leung T."/>
            <person name="Tan I."/>
        </authorList>
    </citation>
    <scope>NUCLEOTIDE SEQUENCE [MRNA] (ISOFORMS 1 AND 2)</scope>
    <scope>INTERACTION WITH CDC42BPA AND CDC42BPB</scope>
    <source>
        <tissue>Brain</tissue>
    </source>
</reference>
<reference key="2">
    <citation type="journal article" date="2004" name="Nature">
        <title>Genome sequence of the Brown Norway rat yields insights into mammalian evolution.</title>
        <authorList>
            <person name="Gibbs R.A."/>
            <person name="Weinstock G.M."/>
            <person name="Metzker M.L."/>
            <person name="Muzny D.M."/>
            <person name="Sodergren E.J."/>
            <person name="Scherer S."/>
            <person name="Scott G."/>
            <person name="Steffen D."/>
            <person name="Worley K.C."/>
            <person name="Burch P.E."/>
            <person name="Okwuonu G."/>
            <person name="Hines S."/>
            <person name="Lewis L."/>
            <person name="Deramo C."/>
            <person name="Delgado O."/>
            <person name="Dugan-Rocha S."/>
            <person name="Miner G."/>
            <person name="Morgan M."/>
            <person name="Hawes A."/>
            <person name="Gill R."/>
            <person name="Holt R.A."/>
            <person name="Adams M.D."/>
            <person name="Amanatides P.G."/>
            <person name="Baden-Tillson H."/>
            <person name="Barnstead M."/>
            <person name="Chin S."/>
            <person name="Evans C.A."/>
            <person name="Ferriera S."/>
            <person name="Fosler C."/>
            <person name="Glodek A."/>
            <person name="Gu Z."/>
            <person name="Jennings D."/>
            <person name="Kraft C.L."/>
            <person name="Nguyen T."/>
            <person name="Pfannkoch C.M."/>
            <person name="Sitter C."/>
            <person name="Sutton G.G."/>
            <person name="Venter J.C."/>
            <person name="Woodage T."/>
            <person name="Smith D."/>
            <person name="Lee H.-M."/>
            <person name="Gustafson E."/>
            <person name="Cahill P."/>
            <person name="Kana A."/>
            <person name="Doucette-Stamm L."/>
            <person name="Weinstock K."/>
            <person name="Fechtel K."/>
            <person name="Weiss R.B."/>
            <person name="Dunn D.M."/>
            <person name="Green E.D."/>
            <person name="Blakesley R.W."/>
            <person name="Bouffard G.G."/>
            <person name="De Jong P.J."/>
            <person name="Osoegawa K."/>
            <person name="Zhu B."/>
            <person name="Marra M."/>
            <person name="Schein J."/>
            <person name="Bosdet I."/>
            <person name="Fjell C."/>
            <person name="Jones S."/>
            <person name="Krzywinski M."/>
            <person name="Mathewson C."/>
            <person name="Siddiqui A."/>
            <person name="Wye N."/>
            <person name="McPherson J."/>
            <person name="Zhao S."/>
            <person name="Fraser C.M."/>
            <person name="Shetty J."/>
            <person name="Shatsman S."/>
            <person name="Geer K."/>
            <person name="Chen Y."/>
            <person name="Abramzon S."/>
            <person name="Nierman W.C."/>
            <person name="Havlak P.H."/>
            <person name="Chen R."/>
            <person name="Durbin K.J."/>
            <person name="Egan A."/>
            <person name="Ren Y."/>
            <person name="Song X.-Z."/>
            <person name="Li B."/>
            <person name="Liu Y."/>
            <person name="Qin X."/>
            <person name="Cawley S."/>
            <person name="Cooney A.J."/>
            <person name="D'Souza L.M."/>
            <person name="Martin K."/>
            <person name="Wu J.Q."/>
            <person name="Gonzalez-Garay M.L."/>
            <person name="Jackson A.R."/>
            <person name="Kalafus K.J."/>
            <person name="McLeod M.P."/>
            <person name="Milosavljevic A."/>
            <person name="Virk D."/>
            <person name="Volkov A."/>
            <person name="Wheeler D.A."/>
            <person name="Zhang Z."/>
            <person name="Bailey J.A."/>
            <person name="Eichler E.E."/>
            <person name="Tuzun E."/>
            <person name="Birney E."/>
            <person name="Mongin E."/>
            <person name="Ureta-Vidal A."/>
            <person name="Woodwark C."/>
            <person name="Zdobnov E."/>
            <person name="Bork P."/>
            <person name="Suyama M."/>
            <person name="Torrents D."/>
            <person name="Alexandersson M."/>
            <person name="Trask B.J."/>
            <person name="Young J.M."/>
            <person name="Huang H."/>
            <person name="Wang H."/>
            <person name="Xing H."/>
            <person name="Daniels S."/>
            <person name="Gietzen D."/>
            <person name="Schmidt J."/>
            <person name="Stevens K."/>
            <person name="Vitt U."/>
            <person name="Wingrove J."/>
            <person name="Camara F."/>
            <person name="Mar Alba M."/>
            <person name="Abril J.F."/>
            <person name="Guigo R."/>
            <person name="Smit A."/>
            <person name="Dubchak I."/>
            <person name="Rubin E.M."/>
            <person name="Couronne O."/>
            <person name="Poliakov A."/>
            <person name="Huebner N."/>
            <person name="Ganten D."/>
            <person name="Goesele C."/>
            <person name="Hummel O."/>
            <person name="Kreitler T."/>
            <person name="Lee Y.-A."/>
            <person name="Monti J."/>
            <person name="Schulz H."/>
            <person name="Zimdahl H."/>
            <person name="Himmelbauer H."/>
            <person name="Lehrach H."/>
            <person name="Jacob H.J."/>
            <person name="Bromberg S."/>
            <person name="Gullings-Handley J."/>
            <person name="Jensen-Seaman M.I."/>
            <person name="Kwitek A.E."/>
            <person name="Lazar J."/>
            <person name="Pasko D."/>
            <person name="Tonellato P.J."/>
            <person name="Twigger S."/>
            <person name="Ponting C.P."/>
            <person name="Duarte J.M."/>
            <person name="Rice S."/>
            <person name="Goodstadt L."/>
            <person name="Beatson S.A."/>
            <person name="Emes R.D."/>
            <person name="Winter E.E."/>
            <person name="Webber C."/>
            <person name="Brandt P."/>
            <person name="Nyakatura G."/>
            <person name="Adetobi M."/>
            <person name="Chiaromonte F."/>
            <person name="Elnitski L."/>
            <person name="Eswara P."/>
            <person name="Hardison R.C."/>
            <person name="Hou M."/>
            <person name="Kolbe D."/>
            <person name="Makova K."/>
            <person name="Miller W."/>
            <person name="Nekrutenko A."/>
            <person name="Riemer C."/>
            <person name="Schwartz S."/>
            <person name="Taylor J."/>
            <person name="Yang S."/>
            <person name="Zhang Y."/>
            <person name="Lindpaintner K."/>
            <person name="Andrews T.D."/>
            <person name="Caccamo M."/>
            <person name="Clamp M."/>
            <person name="Clarke L."/>
            <person name="Curwen V."/>
            <person name="Durbin R.M."/>
            <person name="Eyras E."/>
            <person name="Searle S.M."/>
            <person name="Cooper G.M."/>
            <person name="Batzoglou S."/>
            <person name="Brudno M."/>
            <person name="Sidow A."/>
            <person name="Stone E.A."/>
            <person name="Payseur B.A."/>
            <person name="Bourque G."/>
            <person name="Lopez-Otin C."/>
            <person name="Puente X.S."/>
            <person name="Chakrabarti K."/>
            <person name="Chatterji S."/>
            <person name="Dewey C."/>
            <person name="Pachter L."/>
            <person name="Bray N."/>
            <person name="Yap V.B."/>
            <person name="Caspi A."/>
            <person name="Tesler G."/>
            <person name="Pevzner P.A."/>
            <person name="Haussler D."/>
            <person name="Roskin K.M."/>
            <person name="Baertsch R."/>
            <person name="Clawson H."/>
            <person name="Furey T.S."/>
            <person name="Hinrichs A.S."/>
            <person name="Karolchik D."/>
            <person name="Kent W.J."/>
            <person name="Rosenbloom K.R."/>
            <person name="Trumbower H."/>
            <person name="Weirauch M."/>
            <person name="Cooper D.N."/>
            <person name="Stenson P.D."/>
            <person name="Ma B."/>
            <person name="Brent M."/>
            <person name="Arumugam M."/>
            <person name="Shteynberg D."/>
            <person name="Copley R.R."/>
            <person name="Taylor M.S."/>
            <person name="Riethman H."/>
            <person name="Mudunuri U."/>
            <person name="Peterson J."/>
            <person name="Guyer M."/>
            <person name="Felsenfeld A."/>
            <person name="Old S."/>
            <person name="Mockrin S."/>
            <person name="Collins F.S."/>
        </authorList>
    </citation>
    <scope>NUCLEOTIDE SEQUENCE [LARGE SCALE GENOMIC DNA]</scope>
    <source>
        <strain>Brown Norway</strain>
    </source>
</reference>
<reference key="3">
    <citation type="journal article" date="2004" name="Genome Res.">
        <title>The status, quality, and expansion of the NIH full-length cDNA project: the Mammalian Gene Collection (MGC).</title>
        <authorList>
            <consortium name="The MGC Project Team"/>
        </authorList>
    </citation>
    <scope>NUCLEOTIDE SEQUENCE [LARGE SCALE MRNA] (ISOFORM 1)</scope>
    <source>
        <tissue>Thymus</tissue>
    </source>
</reference>
<gene>
    <name evidence="9" type="primary">Fam89b</name>
    <name evidence="5" type="synonym">Lrap25</name>
    <name evidence="8" type="synonym">Mtvr2</name>
</gene>
<sequence length="189" mass="20169">MNGLPSTEAPGGAGCALAGLPPLPRGLSGLLNASGGSWRELERVYSQRSRIHDELSRAARAPDGPRHAAGSANLGSAAGPRRPVNLDSALAALRKEMVGLRQLDMSLLCQLWGLYESIQDYKHLCQDLSLCQDLSSSLHSDSSYPPDAGLSDDDEPPDASLPPDPPPLTVPQTHNARDQWLQDAFQISL</sequence>
<keyword id="KW-0025">Alternative splicing</keyword>
<keyword id="KW-0966">Cell projection</keyword>
<keyword id="KW-0963">Cytoplasm</keyword>
<keyword id="KW-0433">Leucine-rich repeat</keyword>
<keyword id="KW-0597">Phosphoprotein</keyword>
<keyword id="KW-0675">Receptor</keyword>
<keyword id="KW-1185">Reference proteome</keyword>
<keyword id="KW-0677">Repeat</keyword>
<accession>Q566R4</accession>
<feature type="chain" id="PRO_0000441754" description="Leucine repeat adapter protein 25">
    <location>
        <begin position="1"/>
        <end position="189"/>
    </location>
</feature>
<feature type="repeat" description="LRR" evidence="7">
    <location>
        <begin position="86"/>
        <end position="114"/>
    </location>
</feature>
<feature type="region of interest" description="Disordered" evidence="3">
    <location>
        <begin position="55"/>
        <end position="81"/>
    </location>
</feature>
<feature type="region of interest" description="Disordered" evidence="3">
    <location>
        <begin position="141"/>
        <end position="174"/>
    </location>
</feature>
<feature type="compositionally biased region" description="Low complexity" evidence="3">
    <location>
        <begin position="68"/>
        <end position="79"/>
    </location>
</feature>
<feature type="compositionally biased region" description="Pro residues" evidence="3">
    <location>
        <begin position="159"/>
        <end position="169"/>
    </location>
</feature>
<feature type="modified residue" description="Phosphoserine" evidence="1">
    <location>
        <position position="28"/>
    </location>
</feature>
<feature type="modified residue" description="Phosphoserine" evidence="1">
    <location>
        <position position="188"/>
    </location>
</feature>
<feature type="splice variant" id="VSP_059109" description="In isoform 2.">
    <location>
        <begin position="98"/>
        <end position="110"/>
    </location>
</feature>
<proteinExistence type="evidence at protein level"/>
<protein>
    <recommendedName>
        <fullName evidence="5">Leucine repeat adapter protein 25</fullName>
    </recommendedName>
    <alternativeName>
        <fullName evidence="8">Mammary tumor virus receptor 2</fullName>
    </alternativeName>
</protein>
<name>LRA25_RAT</name>
<organism>
    <name type="scientific">Rattus norvegicus</name>
    <name type="common">Rat</name>
    <dbReference type="NCBI Taxonomy" id="10116"/>
    <lineage>
        <taxon>Eukaryota</taxon>
        <taxon>Metazoa</taxon>
        <taxon>Chordata</taxon>
        <taxon>Craniata</taxon>
        <taxon>Vertebrata</taxon>
        <taxon>Euteleostomi</taxon>
        <taxon>Mammalia</taxon>
        <taxon>Eutheria</taxon>
        <taxon>Euarchontoglires</taxon>
        <taxon>Glires</taxon>
        <taxon>Rodentia</taxon>
        <taxon>Myomorpha</taxon>
        <taxon>Muroidea</taxon>
        <taxon>Muridae</taxon>
        <taxon>Murinae</taxon>
        <taxon>Rattus</taxon>
    </lineage>
</organism>
<comment type="function">
    <text evidence="2">Negatively regulates TGF-beta-induced signaling; in cooperation with SKI prevents the translocation of SMAD2 from the nucleus to the cytoplasm in response to TGF-beta. Acts as an adapter that mediates the specific recognition of LIMK1 by CDC42BPA and CDC42BPB in the lamellipodia. LRAP25-mediated CDC42BPA/CDC42BPB targeting to LIMK1 and the lamellipodium results in LIMK1 activation and the subsequent phosphorylation of CFL1 which is important for lamellipodial F-actin regulation.</text>
</comment>
<comment type="subunit">
    <text evidence="2 4">Interacts with SKI (By similarity). Interacts (via LRR repeat) with CDC42BPA (via AGC-kinase C-terminal domain) and CDC42BPB (via AGC-kinase C-terminal domain) (PubMed:25107909). Interacts (via LRR repeat) with LIMK1 (via LIM zinc-binding domains). Forms a tripartite complex with CDC42BPA, CDC42BPB and LIMK1 (By similarity).</text>
</comment>
<comment type="subcellular location">
    <subcellularLocation>
        <location evidence="2">Cytoplasm</location>
    </subcellularLocation>
    <subcellularLocation>
        <location evidence="2">Cell projection</location>
        <location evidence="2">Lamellipodium</location>
    </subcellularLocation>
    <text evidence="2">Co-localizes with CDC42BPA, CDC42BPB and LIMK1 in the lamellipodium.</text>
</comment>
<comment type="alternative products">
    <event type="alternative splicing"/>
    <isoform>
        <id>Q566R4-1</id>
        <name>1</name>
        <sequence type="displayed"/>
    </isoform>
    <isoform>
        <id>Q566R4-2</id>
        <name>2</name>
        <sequence type="described" ref="VSP_059109"/>
    </isoform>
    <text>Additional isoforms seem to exist.</text>
</comment>
<comment type="similarity">
    <text evidence="6">Belongs to the FAM89 family.</text>
</comment>